<organism>
    <name type="scientific">Streptococcus pneumoniae serotype 19F (strain G54)</name>
    <dbReference type="NCBI Taxonomy" id="512566"/>
    <lineage>
        <taxon>Bacteria</taxon>
        <taxon>Bacillati</taxon>
        <taxon>Bacillota</taxon>
        <taxon>Bacilli</taxon>
        <taxon>Lactobacillales</taxon>
        <taxon>Streptococcaceae</taxon>
        <taxon>Streptococcus</taxon>
    </lineage>
</organism>
<feature type="chain" id="PRO_1000094199" description="Transcription elongation factor GreA">
    <location>
        <begin position="1"/>
        <end position="160"/>
    </location>
</feature>
<feature type="coiled-coil region" evidence="1">
    <location>
        <begin position="1"/>
        <end position="72"/>
    </location>
</feature>
<gene>
    <name evidence="1" type="primary">greA</name>
    <name type="ordered locus">SPG_1441</name>
</gene>
<proteinExistence type="inferred from homology"/>
<evidence type="ECO:0000255" key="1">
    <source>
        <dbReference type="HAMAP-Rule" id="MF_00105"/>
    </source>
</evidence>
<dbReference type="EMBL" id="CP001015">
    <property type="protein sequence ID" value="ACF55442.1"/>
    <property type="molecule type" value="Genomic_DNA"/>
</dbReference>
<dbReference type="SMR" id="B5E681"/>
<dbReference type="KEGG" id="spx:SPG_1441"/>
<dbReference type="HOGENOM" id="CLU_101379_2_1_9"/>
<dbReference type="GO" id="GO:0003677">
    <property type="term" value="F:DNA binding"/>
    <property type="evidence" value="ECO:0007669"/>
    <property type="project" value="UniProtKB-UniRule"/>
</dbReference>
<dbReference type="GO" id="GO:0070063">
    <property type="term" value="F:RNA polymerase binding"/>
    <property type="evidence" value="ECO:0007669"/>
    <property type="project" value="InterPro"/>
</dbReference>
<dbReference type="GO" id="GO:0006354">
    <property type="term" value="P:DNA-templated transcription elongation"/>
    <property type="evidence" value="ECO:0007669"/>
    <property type="project" value="TreeGrafter"/>
</dbReference>
<dbReference type="GO" id="GO:0032784">
    <property type="term" value="P:regulation of DNA-templated transcription elongation"/>
    <property type="evidence" value="ECO:0007669"/>
    <property type="project" value="UniProtKB-UniRule"/>
</dbReference>
<dbReference type="FunFam" id="1.10.287.180:FF:000001">
    <property type="entry name" value="Transcription elongation factor GreA"/>
    <property type="match status" value="1"/>
</dbReference>
<dbReference type="FunFam" id="3.10.50.30:FF:000001">
    <property type="entry name" value="Transcription elongation factor GreA"/>
    <property type="match status" value="1"/>
</dbReference>
<dbReference type="Gene3D" id="3.10.50.30">
    <property type="entry name" value="Transcription elongation factor, GreA/GreB, C-terminal domain"/>
    <property type="match status" value="1"/>
</dbReference>
<dbReference type="Gene3D" id="1.10.287.180">
    <property type="entry name" value="Transcription elongation factor, GreA/GreB, N-terminal domain"/>
    <property type="match status" value="1"/>
</dbReference>
<dbReference type="HAMAP" id="MF_00105">
    <property type="entry name" value="GreA_GreB"/>
    <property type="match status" value="1"/>
</dbReference>
<dbReference type="InterPro" id="IPR036953">
    <property type="entry name" value="GreA/GreB_C_sf"/>
</dbReference>
<dbReference type="InterPro" id="IPR018151">
    <property type="entry name" value="TF_GreA/GreB_CS"/>
</dbReference>
<dbReference type="InterPro" id="IPR006359">
    <property type="entry name" value="Tscrpt_elong_fac_GreA"/>
</dbReference>
<dbReference type="InterPro" id="IPR028624">
    <property type="entry name" value="Tscrpt_elong_fac_GreA/B"/>
</dbReference>
<dbReference type="InterPro" id="IPR001437">
    <property type="entry name" value="Tscrpt_elong_fac_GreA/B_C"/>
</dbReference>
<dbReference type="InterPro" id="IPR023459">
    <property type="entry name" value="Tscrpt_elong_fac_GreA/B_fam"/>
</dbReference>
<dbReference type="InterPro" id="IPR022691">
    <property type="entry name" value="Tscrpt_elong_fac_GreA/B_N"/>
</dbReference>
<dbReference type="InterPro" id="IPR036805">
    <property type="entry name" value="Tscrpt_elong_fac_GreA/B_N_sf"/>
</dbReference>
<dbReference type="NCBIfam" id="TIGR01462">
    <property type="entry name" value="greA"/>
    <property type="match status" value="1"/>
</dbReference>
<dbReference type="NCBIfam" id="NF001260">
    <property type="entry name" value="PRK00226.1-1"/>
    <property type="match status" value="1"/>
</dbReference>
<dbReference type="NCBIfam" id="NF001263">
    <property type="entry name" value="PRK00226.1-4"/>
    <property type="match status" value="1"/>
</dbReference>
<dbReference type="PANTHER" id="PTHR30437">
    <property type="entry name" value="TRANSCRIPTION ELONGATION FACTOR GREA"/>
    <property type="match status" value="1"/>
</dbReference>
<dbReference type="PANTHER" id="PTHR30437:SF4">
    <property type="entry name" value="TRANSCRIPTION ELONGATION FACTOR GREA"/>
    <property type="match status" value="1"/>
</dbReference>
<dbReference type="Pfam" id="PF01272">
    <property type="entry name" value="GreA_GreB"/>
    <property type="match status" value="1"/>
</dbReference>
<dbReference type="Pfam" id="PF03449">
    <property type="entry name" value="GreA_GreB_N"/>
    <property type="match status" value="1"/>
</dbReference>
<dbReference type="PIRSF" id="PIRSF006092">
    <property type="entry name" value="GreA_GreB"/>
    <property type="match status" value="1"/>
</dbReference>
<dbReference type="SUPFAM" id="SSF54534">
    <property type="entry name" value="FKBP-like"/>
    <property type="match status" value="1"/>
</dbReference>
<dbReference type="SUPFAM" id="SSF46557">
    <property type="entry name" value="GreA transcript cleavage protein, N-terminal domain"/>
    <property type="match status" value="1"/>
</dbReference>
<dbReference type="PROSITE" id="PS00829">
    <property type="entry name" value="GREAB_1"/>
    <property type="match status" value="1"/>
</dbReference>
<dbReference type="PROSITE" id="PS00830">
    <property type="entry name" value="GREAB_2"/>
    <property type="match status" value="1"/>
</dbReference>
<sequence>MAEKTYPMTLEEKEKLEKELEELKLVRRPEVVERIKIARSYGDLSENSEYEAAKDEQAFVEGQISSLETKIRYAEIVNSDAVAQDEVAIGKTVTIQEIGEDEEEVYIIVGSAGADAFAGKVSNESPIGQALIGKKTGDTATIETPVGSYDVKILKVEKTA</sequence>
<protein>
    <recommendedName>
        <fullName evidence="1">Transcription elongation factor GreA</fullName>
    </recommendedName>
    <alternativeName>
        <fullName evidence="1">Transcript cleavage factor GreA</fullName>
    </alternativeName>
</protein>
<accession>B5E681</accession>
<keyword id="KW-0175">Coiled coil</keyword>
<keyword id="KW-0238">DNA-binding</keyword>
<keyword id="KW-0804">Transcription</keyword>
<keyword id="KW-0805">Transcription regulation</keyword>
<name>GREA_STRP4</name>
<comment type="function">
    <text evidence="1">Necessary for efficient RNA polymerase transcription elongation past template-encoded arresting sites. The arresting sites in DNA have the property of trapping a certain fraction of elongating RNA polymerases that pass through, resulting in locked ternary complexes. Cleavage of the nascent transcript by cleavage factors such as GreA or GreB allows the resumption of elongation from the new 3'terminus. GreA releases sequences of 2 to 3 nucleotides.</text>
</comment>
<comment type="similarity">
    <text evidence="1">Belongs to the GreA/GreB family.</text>
</comment>
<reference key="1">
    <citation type="journal article" date="2001" name="Microb. Drug Resist.">
        <title>Annotated draft genomic sequence from a Streptococcus pneumoniae type 19F clinical isolate.</title>
        <authorList>
            <person name="Dopazo J."/>
            <person name="Mendoza A."/>
            <person name="Herrero J."/>
            <person name="Caldara F."/>
            <person name="Humbert Y."/>
            <person name="Friedli L."/>
            <person name="Guerrier M."/>
            <person name="Grand-Schenk E."/>
            <person name="Gandin C."/>
            <person name="de Francesco M."/>
            <person name="Polissi A."/>
            <person name="Buell G."/>
            <person name="Feger G."/>
            <person name="Garcia E."/>
            <person name="Peitsch M."/>
            <person name="Garcia-Bustos J.F."/>
        </authorList>
    </citation>
    <scope>NUCLEOTIDE SEQUENCE [LARGE SCALE GENOMIC DNA]</scope>
    <source>
        <strain>G54</strain>
    </source>
</reference>
<reference key="2">
    <citation type="submission" date="2008-03" db="EMBL/GenBank/DDBJ databases">
        <title>Pneumococcal beta glucoside metabolism investigated by whole genome comparison.</title>
        <authorList>
            <person name="Mulas L."/>
            <person name="Trappetti C."/>
            <person name="Hakenbeck R."/>
            <person name="Iannelli F."/>
            <person name="Pozzi G."/>
            <person name="Davidsen T.M."/>
            <person name="Tettelin H."/>
            <person name="Oggioni M."/>
        </authorList>
    </citation>
    <scope>NUCLEOTIDE SEQUENCE [LARGE SCALE GENOMIC DNA]</scope>
    <source>
        <strain>G54</strain>
    </source>
</reference>